<gene>
    <name evidence="1" type="primary">rsmG</name>
    <name type="ordered locus">ABAYE2083</name>
</gene>
<proteinExistence type="inferred from homology"/>
<name>RSMG_ACIBY</name>
<reference key="1">
    <citation type="journal article" date="2008" name="PLoS ONE">
        <title>Comparative analysis of Acinetobacters: three genomes for three lifestyles.</title>
        <authorList>
            <person name="Vallenet D."/>
            <person name="Nordmann P."/>
            <person name="Barbe V."/>
            <person name="Poirel L."/>
            <person name="Mangenot S."/>
            <person name="Bataille E."/>
            <person name="Dossat C."/>
            <person name="Gas S."/>
            <person name="Kreimeyer A."/>
            <person name="Lenoble P."/>
            <person name="Oztas S."/>
            <person name="Poulain J."/>
            <person name="Segurens B."/>
            <person name="Robert C."/>
            <person name="Abergel C."/>
            <person name="Claverie J.-M."/>
            <person name="Raoult D."/>
            <person name="Medigue C."/>
            <person name="Weissenbach J."/>
            <person name="Cruveiller S."/>
        </authorList>
    </citation>
    <scope>NUCLEOTIDE SEQUENCE [LARGE SCALE GENOMIC DNA]</scope>
    <source>
        <strain>AYE</strain>
    </source>
</reference>
<accession>B0VCZ6</accession>
<feature type="chain" id="PRO_0000342901" description="Ribosomal RNA small subunit methyltransferase G">
    <location>
        <begin position="1"/>
        <end position="210"/>
    </location>
</feature>
<feature type="binding site" evidence="1">
    <location>
        <position position="76"/>
    </location>
    <ligand>
        <name>S-adenosyl-L-methionine</name>
        <dbReference type="ChEBI" id="CHEBI:59789"/>
    </ligand>
</feature>
<feature type="binding site" evidence="1">
    <location>
        <position position="81"/>
    </location>
    <ligand>
        <name>S-adenosyl-L-methionine</name>
        <dbReference type="ChEBI" id="CHEBI:59789"/>
    </ligand>
</feature>
<feature type="binding site" evidence="1">
    <location>
        <begin position="127"/>
        <end position="128"/>
    </location>
    <ligand>
        <name>S-adenosyl-L-methionine</name>
        <dbReference type="ChEBI" id="CHEBI:59789"/>
    </ligand>
</feature>
<feature type="binding site" evidence="1">
    <location>
        <position position="145"/>
    </location>
    <ligand>
        <name>S-adenosyl-L-methionine</name>
        <dbReference type="ChEBI" id="CHEBI:59789"/>
    </ligand>
</feature>
<evidence type="ECO:0000255" key="1">
    <source>
        <dbReference type="HAMAP-Rule" id="MF_00074"/>
    </source>
</evidence>
<keyword id="KW-0963">Cytoplasm</keyword>
<keyword id="KW-0489">Methyltransferase</keyword>
<keyword id="KW-0698">rRNA processing</keyword>
<keyword id="KW-0949">S-adenosyl-L-methionine</keyword>
<keyword id="KW-0808">Transferase</keyword>
<dbReference type="EC" id="2.1.1.170" evidence="1"/>
<dbReference type="EMBL" id="CU459141">
    <property type="protein sequence ID" value="CAM86958.1"/>
    <property type="molecule type" value="Genomic_DNA"/>
</dbReference>
<dbReference type="RefSeq" id="WP_000553193.1">
    <property type="nucleotide sequence ID" value="NZ_JBDGFB010000001.1"/>
</dbReference>
<dbReference type="SMR" id="B0VCZ6"/>
<dbReference type="EnsemblBacteria" id="CAM86958">
    <property type="protein sequence ID" value="CAM86958"/>
    <property type="gene ID" value="ABAYE2083"/>
</dbReference>
<dbReference type="GeneID" id="92893779"/>
<dbReference type="KEGG" id="aby:ABAYE2083"/>
<dbReference type="HOGENOM" id="CLU_065341_2_0_6"/>
<dbReference type="GO" id="GO:0005829">
    <property type="term" value="C:cytosol"/>
    <property type="evidence" value="ECO:0007669"/>
    <property type="project" value="TreeGrafter"/>
</dbReference>
<dbReference type="GO" id="GO:0070043">
    <property type="term" value="F:rRNA (guanine-N7-)-methyltransferase activity"/>
    <property type="evidence" value="ECO:0007669"/>
    <property type="project" value="UniProtKB-UniRule"/>
</dbReference>
<dbReference type="Gene3D" id="3.40.50.150">
    <property type="entry name" value="Vaccinia Virus protein VP39"/>
    <property type="match status" value="1"/>
</dbReference>
<dbReference type="HAMAP" id="MF_00074">
    <property type="entry name" value="16SrRNA_methyltr_G"/>
    <property type="match status" value="1"/>
</dbReference>
<dbReference type="InterPro" id="IPR003682">
    <property type="entry name" value="rRNA_ssu_MeTfrase_G"/>
</dbReference>
<dbReference type="InterPro" id="IPR029063">
    <property type="entry name" value="SAM-dependent_MTases_sf"/>
</dbReference>
<dbReference type="NCBIfam" id="TIGR00138">
    <property type="entry name" value="rsmG_gidB"/>
    <property type="match status" value="1"/>
</dbReference>
<dbReference type="PANTHER" id="PTHR31760">
    <property type="entry name" value="S-ADENOSYL-L-METHIONINE-DEPENDENT METHYLTRANSFERASES SUPERFAMILY PROTEIN"/>
    <property type="match status" value="1"/>
</dbReference>
<dbReference type="PANTHER" id="PTHR31760:SF0">
    <property type="entry name" value="S-ADENOSYL-L-METHIONINE-DEPENDENT METHYLTRANSFERASES SUPERFAMILY PROTEIN"/>
    <property type="match status" value="1"/>
</dbReference>
<dbReference type="Pfam" id="PF02527">
    <property type="entry name" value="GidB"/>
    <property type="match status" value="1"/>
</dbReference>
<dbReference type="PIRSF" id="PIRSF003078">
    <property type="entry name" value="GidB"/>
    <property type="match status" value="1"/>
</dbReference>
<dbReference type="SUPFAM" id="SSF53335">
    <property type="entry name" value="S-adenosyl-L-methionine-dependent methyltransferases"/>
    <property type="match status" value="1"/>
</dbReference>
<comment type="function">
    <text evidence="1">Specifically methylates the N7 position of guanine in position 527 of 16S rRNA.</text>
</comment>
<comment type="catalytic activity">
    <reaction evidence="1">
        <text>guanosine(527) in 16S rRNA + S-adenosyl-L-methionine = N(7)-methylguanosine(527) in 16S rRNA + S-adenosyl-L-homocysteine</text>
        <dbReference type="Rhea" id="RHEA:42732"/>
        <dbReference type="Rhea" id="RHEA-COMP:10209"/>
        <dbReference type="Rhea" id="RHEA-COMP:10210"/>
        <dbReference type="ChEBI" id="CHEBI:57856"/>
        <dbReference type="ChEBI" id="CHEBI:59789"/>
        <dbReference type="ChEBI" id="CHEBI:74269"/>
        <dbReference type="ChEBI" id="CHEBI:74480"/>
        <dbReference type="EC" id="2.1.1.170"/>
    </reaction>
</comment>
<comment type="subcellular location">
    <subcellularLocation>
        <location evidence="1">Cytoplasm</location>
    </subcellularLocation>
</comment>
<comment type="similarity">
    <text evidence="1">Belongs to the methyltransferase superfamily. RNA methyltransferase RsmG family.</text>
</comment>
<protein>
    <recommendedName>
        <fullName evidence="1">Ribosomal RNA small subunit methyltransferase G</fullName>
        <ecNumber evidence="1">2.1.1.170</ecNumber>
    </recommendedName>
    <alternativeName>
        <fullName evidence="1">16S rRNA 7-methylguanosine methyltransferase</fullName>
        <shortName evidence="1">16S rRNA m7G methyltransferase</shortName>
    </alternativeName>
</protein>
<organism>
    <name type="scientific">Acinetobacter baumannii (strain AYE)</name>
    <dbReference type="NCBI Taxonomy" id="509173"/>
    <lineage>
        <taxon>Bacteria</taxon>
        <taxon>Pseudomonadati</taxon>
        <taxon>Pseudomonadota</taxon>
        <taxon>Gammaproteobacteria</taxon>
        <taxon>Moraxellales</taxon>
        <taxon>Moraxellaceae</taxon>
        <taxon>Acinetobacter</taxon>
        <taxon>Acinetobacter calcoaceticus/baumannii complex</taxon>
    </lineage>
</organism>
<sequence>MHPFFQELQQGSQKLGLSLSDEALTLLLKYQDALVLWNKAYNLTAIRDPKEMLVKHLLDSLSILKDLPAGRLLDVGTGGGMPGMIIALCQPERSCVLLDSNGKKIRFLKQFIADLKLKNVIAVQTRVENQDTIDELGQFDVITSRAFASLTDFVEAARPYLHEQSIIAAMKGLIPVEEMEELKQEFSCKVIELHVPRLDEQRHLLLLQRI</sequence>